<keyword id="KW-0007">Acetylation</keyword>
<keyword id="KW-0963">Cytoplasm</keyword>
<keyword id="KW-0206">Cytoskeleton</keyword>
<keyword id="KW-0342">GTP-binding</keyword>
<keyword id="KW-0378">Hydrolase</keyword>
<keyword id="KW-0460">Magnesium</keyword>
<keyword id="KW-0479">Metal-binding</keyword>
<keyword id="KW-0493">Microtubule</keyword>
<keyword id="KW-0547">Nucleotide-binding</keyword>
<protein>
    <recommendedName>
        <fullName>Tubulin alpha-13 chain</fullName>
        <ecNumber evidence="2">3.6.5.-</ecNumber>
    </recommendedName>
</protein>
<reference key="1">
    <citation type="journal article" date="1995" name="Misainmurhag Hoiji">
        <title>Cloning and sequence determination of alpha-tubulin, beta-tubulin and flagellar calmodulin.</title>
        <authorList>
            <person name="Choi Y.-J."/>
            <person name="Park H.-L."/>
            <person name="Lee J.-H."/>
        </authorList>
    </citation>
    <scope>NUCLEOTIDE SEQUENCE [MRNA]</scope>
    <source>
        <strain>ATCC 30961 / NB-1</strain>
    </source>
</reference>
<name>TBA13_NAEPR</name>
<organism>
    <name type="scientific">Naegleria pringsheimi</name>
    <name type="common">Amoeba</name>
    <dbReference type="NCBI Taxonomy" id="234921"/>
    <lineage>
        <taxon>Eukaryota</taxon>
        <taxon>Discoba</taxon>
        <taxon>Heterolobosea</taxon>
        <taxon>Tetramitia</taxon>
        <taxon>Eutetramitia</taxon>
        <taxon>Vahlkampfiidae</taxon>
        <taxon>Naegleria</taxon>
    </lineage>
</organism>
<dbReference type="EC" id="3.6.5.-" evidence="2"/>
<dbReference type="EMBL" id="X81049">
    <property type="protein sequence ID" value="CAA56939.1"/>
    <property type="molecule type" value="mRNA"/>
</dbReference>
<dbReference type="SMR" id="Q25563"/>
<dbReference type="GO" id="GO:0005737">
    <property type="term" value="C:cytoplasm"/>
    <property type="evidence" value="ECO:0007669"/>
    <property type="project" value="UniProtKB-KW"/>
</dbReference>
<dbReference type="GO" id="GO:0005874">
    <property type="term" value="C:microtubule"/>
    <property type="evidence" value="ECO:0007669"/>
    <property type="project" value="UniProtKB-KW"/>
</dbReference>
<dbReference type="GO" id="GO:0005525">
    <property type="term" value="F:GTP binding"/>
    <property type="evidence" value="ECO:0007669"/>
    <property type="project" value="UniProtKB-KW"/>
</dbReference>
<dbReference type="GO" id="GO:0016787">
    <property type="term" value="F:hydrolase activity"/>
    <property type="evidence" value="ECO:0007669"/>
    <property type="project" value="UniProtKB-KW"/>
</dbReference>
<dbReference type="GO" id="GO:0046872">
    <property type="term" value="F:metal ion binding"/>
    <property type="evidence" value="ECO:0007669"/>
    <property type="project" value="UniProtKB-KW"/>
</dbReference>
<dbReference type="GO" id="GO:0005200">
    <property type="term" value="F:structural constituent of cytoskeleton"/>
    <property type="evidence" value="ECO:0007669"/>
    <property type="project" value="InterPro"/>
</dbReference>
<dbReference type="GO" id="GO:0007017">
    <property type="term" value="P:microtubule-based process"/>
    <property type="evidence" value="ECO:0007669"/>
    <property type="project" value="InterPro"/>
</dbReference>
<dbReference type="CDD" id="cd02186">
    <property type="entry name" value="alpha_tubulin"/>
    <property type="match status" value="1"/>
</dbReference>
<dbReference type="FunFam" id="1.10.287.600:FF:000005">
    <property type="entry name" value="Tubulin alpha chain"/>
    <property type="match status" value="1"/>
</dbReference>
<dbReference type="FunFam" id="3.30.1330.20:FF:000001">
    <property type="entry name" value="Tubulin alpha chain"/>
    <property type="match status" value="1"/>
</dbReference>
<dbReference type="FunFam" id="3.40.50.1440:FF:000004">
    <property type="entry name" value="Tubulin alpha chain"/>
    <property type="match status" value="1"/>
</dbReference>
<dbReference type="Gene3D" id="1.10.287.600">
    <property type="entry name" value="Helix hairpin bin"/>
    <property type="match status" value="1"/>
</dbReference>
<dbReference type="Gene3D" id="3.30.1330.20">
    <property type="entry name" value="Tubulin/FtsZ, C-terminal domain"/>
    <property type="match status" value="1"/>
</dbReference>
<dbReference type="Gene3D" id="3.40.50.1440">
    <property type="entry name" value="Tubulin/FtsZ, GTPase domain"/>
    <property type="match status" value="1"/>
</dbReference>
<dbReference type="InterPro" id="IPR002452">
    <property type="entry name" value="Alpha_tubulin"/>
</dbReference>
<dbReference type="InterPro" id="IPR008280">
    <property type="entry name" value="Tub_FtsZ_C"/>
</dbReference>
<dbReference type="InterPro" id="IPR000217">
    <property type="entry name" value="Tubulin"/>
</dbReference>
<dbReference type="InterPro" id="IPR037103">
    <property type="entry name" value="Tubulin/FtsZ-like_C"/>
</dbReference>
<dbReference type="InterPro" id="IPR018316">
    <property type="entry name" value="Tubulin/FtsZ_2-layer-sand-dom"/>
</dbReference>
<dbReference type="InterPro" id="IPR036525">
    <property type="entry name" value="Tubulin/FtsZ_GTPase_sf"/>
</dbReference>
<dbReference type="InterPro" id="IPR023123">
    <property type="entry name" value="Tubulin_C"/>
</dbReference>
<dbReference type="InterPro" id="IPR017975">
    <property type="entry name" value="Tubulin_CS"/>
</dbReference>
<dbReference type="InterPro" id="IPR003008">
    <property type="entry name" value="Tubulin_FtsZ_GTPase"/>
</dbReference>
<dbReference type="PANTHER" id="PTHR11588">
    <property type="entry name" value="TUBULIN"/>
    <property type="match status" value="1"/>
</dbReference>
<dbReference type="Pfam" id="PF00091">
    <property type="entry name" value="Tubulin"/>
    <property type="match status" value="1"/>
</dbReference>
<dbReference type="Pfam" id="PF03953">
    <property type="entry name" value="Tubulin_C"/>
    <property type="match status" value="1"/>
</dbReference>
<dbReference type="PRINTS" id="PR01162">
    <property type="entry name" value="ALPHATUBULIN"/>
</dbReference>
<dbReference type="PRINTS" id="PR01161">
    <property type="entry name" value="TUBULIN"/>
</dbReference>
<dbReference type="SMART" id="SM00864">
    <property type="entry name" value="Tubulin"/>
    <property type="match status" value="1"/>
</dbReference>
<dbReference type="SMART" id="SM00865">
    <property type="entry name" value="Tubulin_C"/>
    <property type="match status" value="1"/>
</dbReference>
<dbReference type="SUPFAM" id="SSF55307">
    <property type="entry name" value="Tubulin C-terminal domain-like"/>
    <property type="match status" value="1"/>
</dbReference>
<dbReference type="SUPFAM" id="SSF52490">
    <property type="entry name" value="Tubulin nucleotide-binding domain-like"/>
    <property type="match status" value="1"/>
</dbReference>
<dbReference type="PROSITE" id="PS00227">
    <property type="entry name" value="TUBULIN"/>
    <property type="match status" value="1"/>
</dbReference>
<proteinExistence type="evidence at transcript level"/>
<evidence type="ECO:0000250" key="1"/>
<evidence type="ECO:0000250" key="2">
    <source>
        <dbReference type="UniProtKB" id="P68363"/>
    </source>
</evidence>
<evidence type="ECO:0000256" key="3">
    <source>
        <dbReference type="SAM" id="MobiDB-lite"/>
    </source>
</evidence>
<evidence type="ECO:0000305" key="4"/>
<comment type="function">
    <text>Tubulin is the major constituent of microtubules, a cylinder consisting of laterally associated linear protofilaments composed of alpha- and beta-tubulin heterodimers. Microtubules grow by the addition of GTP-tubulin dimers to the microtubule end, where a stabilizing cap forms. Below the cap, tubulin dimers are in GDP-bound state, owing to GTPase activity of alpha-tubulin.</text>
</comment>
<comment type="catalytic activity">
    <reaction evidence="2">
        <text>GTP + H2O = GDP + phosphate + H(+)</text>
        <dbReference type="Rhea" id="RHEA:19669"/>
        <dbReference type="ChEBI" id="CHEBI:15377"/>
        <dbReference type="ChEBI" id="CHEBI:15378"/>
        <dbReference type="ChEBI" id="CHEBI:37565"/>
        <dbReference type="ChEBI" id="CHEBI:43474"/>
        <dbReference type="ChEBI" id="CHEBI:58189"/>
    </reaction>
    <physiologicalReaction direction="left-to-right" evidence="2">
        <dbReference type="Rhea" id="RHEA:19670"/>
    </physiologicalReaction>
</comment>
<comment type="cofactor">
    <cofactor evidence="2">
        <name>Mg(2+)</name>
        <dbReference type="ChEBI" id="CHEBI:18420"/>
    </cofactor>
</comment>
<comment type="subunit">
    <text>Dimer of alpha and beta chains. A typical microtubule is a hollow water-filled tube with an outer diameter of 25 nm and an inner diameter of 15 nM. Alpha-beta heterodimers associate head-to-tail to form protofilaments running lengthwise along the microtubule wall with the beta-tubulin subunit facing the microtubule plus end conferring a structural polarity. Microtubules usually have 13 protofilaments but different protofilament numbers can be found in some organisms and specialized cells.</text>
</comment>
<comment type="subcellular location">
    <subcellularLocation>
        <location>Cytoplasm</location>
        <location>Cytoskeleton</location>
    </subcellularLocation>
</comment>
<comment type="PTM">
    <text evidence="1">Acetylation of alpha chains at Lys-40 stabilizes microtubules and affects affinity and processivity of microtubule motors. This modification has a role in multiple cellular functions, ranging from cell motility, cell cycle progression or cell differentiation to intracellular trafficking and signaling (By similarity).</text>
</comment>
<comment type="similarity">
    <text evidence="4">Belongs to the tubulin family.</text>
</comment>
<sequence length="453" mass="49813">MREVISIHIGQAGVQVGNACWELYCLEHGIQPDGLMPSSKTIGVEDDAFNTFFSETGAGKHVPRAVFLDLEPTVVDEVRTGTYRQLFHPEQLITGKEDAANNYARGHYTIGKEIVDLCLDRIRKLADNCTGLQGFLVFSSVGGGTGSGLGALLLERLSVDYGKKSKLGFTVYPSPQVATAVVEPYNSVLSTHALLEHTDVAVMLDNEAIYDICRRSLDIQRPTYTNLNRLIAQVISSLTASLRFDGALNVDVTEFQTNLVPYPRIHFMLCSYAPVISAEKAYHEQLSVAEITNSAFEPASMMAKCDPRHGKYMACCLMYRGDVVPKDVNAAVATIKTKRTIQFVDWSPTGFKCGINYQPPTVVPGGDLAKVQRAVCMISNSTAIAEVFSRIDHKFDLMYAKRAFVHWYVGEGMEEGEFSEAREDLAALEKDYEEVGTESQEGDGEEGEDGGDQ</sequence>
<gene>
    <name type="primary">TUBA13</name>
</gene>
<feature type="chain" id="PRO_0000048197" description="Tubulin alpha-13 chain">
    <location>
        <begin position="1"/>
        <end position="453"/>
    </location>
</feature>
<feature type="region of interest" description="Disordered" evidence="3">
    <location>
        <begin position="429"/>
        <end position="453"/>
    </location>
</feature>
<feature type="compositionally biased region" description="Acidic residues" evidence="3">
    <location>
        <begin position="431"/>
        <end position="453"/>
    </location>
</feature>
<feature type="active site" evidence="2">
    <location>
        <position position="254"/>
    </location>
</feature>
<feature type="binding site" evidence="2">
    <location>
        <position position="11"/>
    </location>
    <ligand>
        <name>GTP</name>
        <dbReference type="ChEBI" id="CHEBI:37565"/>
    </ligand>
</feature>
<feature type="binding site" evidence="2">
    <location>
        <position position="71"/>
    </location>
    <ligand>
        <name>GTP</name>
        <dbReference type="ChEBI" id="CHEBI:37565"/>
    </ligand>
</feature>
<feature type="binding site" evidence="2">
    <location>
        <position position="71"/>
    </location>
    <ligand>
        <name>Mg(2+)</name>
        <dbReference type="ChEBI" id="CHEBI:18420"/>
    </ligand>
</feature>
<feature type="binding site" evidence="2">
    <location>
        <position position="140"/>
    </location>
    <ligand>
        <name>GTP</name>
        <dbReference type="ChEBI" id="CHEBI:37565"/>
    </ligand>
</feature>
<feature type="binding site" evidence="2">
    <location>
        <position position="144"/>
    </location>
    <ligand>
        <name>GTP</name>
        <dbReference type="ChEBI" id="CHEBI:37565"/>
    </ligand>
</feature>
<feature type="binding site" evidence="2">
    <location>
        <position position="145"/>
    </location>
    <ligand>
        <name>GTP</name>
        <dbReference type="ChEBI" id="CHEBI:37565"/>
    </ligand>
</feature>
<feature type="binding site" evidence="2">
    <location>
        <position position="179"/>
    </location>
    <ligand>
        <name>GTP</name>
        <dbReference type="ChEBI" id="CHEBI:37565"/>
    </ligand>
</feature>
<feature type="binding site" evidence="2">
    <location>
        <position position="206"/>
    </location>
    <ligand>
        <name>GTP</name>
        <dbReference type="ChEBI" id="CHEBI:37565"/>
    </ligand>
</feature>
<feature type="binding site" evidence="2">
    <location>
        <position position="228"/>
    </location>
    <ligand>
        <name>GTP</name>
        <dbReference type="ChEBI" id="CHEBI:37565"/>
    </ligand>
</feature>
<feature type="modified residue" description="N6-acetyllysine" evidence="1">
    <location>
        <position position="40"/>
    </location>
</feature>
<accession>Q25563</accession>